<reference key="1">
    <citation type="journal article" date="2007" name="Proc. Natl. Acad. Sci. U.S.A.">
        <title>The genome of Syntrophus aciditrophicus: life at the thermodynamic limit of microbial growth.</title>
        <authorList>
            <person name="McInerney M.J."/>
            <person name="Rohlin L."/>
            <person name="Mouttaki H."/>
            <person name="Kim U."/>
            <person name="Krupp R.S."/>
            <person name="Rios-Hernandez L."/>
            <person name="Sieber J."/>
            <person name="Struchtemeyer C.G."/>
            <person name="Bhattacharyya A."/>
            <person name="Campbell J.W."/>
            <person name="Gunsalus R.P."/>
        </authorList>
    </citation>
    <scope>NUCLEOTIDE SEQUENCE [LARGE SCALE GENOMIC DNA]</scope>
    <source>
        <strain>SB</strain>
    </source>
</reference>
<protein>
    <recommendedName>
        <fullName evidence="1">Lipid-A-disaccharide synthase</fullName>
        <ecNumber evidence="1">2.4.1.182</ecNumber>
    </recommendedName>
</protein>
<organism>
    <name type="scientific">Syntrophus aciditrophicus (strain SB)</name>
    <dbReference type="NCBI Taxonomy" id="56780"/>
    <lineage>
        <taxon>Bacteria</taxon>
        <taxon>Pseudomonadati</taxon>
        <taxon>Thermodesulfobacteriota</taxon>
        <taxon>Syntrophia</taxon>
        <taxon>Syntrophales</taxon>
        <taxon>Syntrophaceae</taxon>
        <taxon>Syntrophus</taxon>
    </lineage>
</organism>
<name>LPXB_SYNAS</name>
<sequence length="383" mass="41277">MNSKLVLIVAGEASGDLHGASLVGAMVKREPGIRFYGIGGVNLKTAGVDLWADAADMAVVGLTEVASKLRGILTVMHRLKKSMQLLKPDLVILIDYPDFNLPLARSAKKNGIPVFYYISPQVWAWRKGRLRTISGLVDRMAVILPFEEPLYRQAGVDVSFVGHPLLDVVQATSSRDETLRMFGLREDVTTVALLPGSRKGEVTRLLPVMLKAARILTENICPVQFLLPMANTLDETWMKDQIAKADPPGVRLIRGATYDAVAAADAAVVVSGTATLETALLGTPLIVIYKVSALSYLIGRMLISVDHIGLVNIVAGKTVAPELIQGAANPERIAAEILAILGQPDRRKAIQEELSHLRDKLGLPGAAERAAVMALTLIKKSDC</sequence>
<feature type="chain" id="PRO_0000255228" description="Lipid-A-disaccharide synthase">
    <location>
        <begin position="1"/>
        <end position="383"/>
    </location>
</feature>
<gene>
    <name evidence="1" type="primary">lpxB</name>
    <name type="ordered locus">SYNAS_22450</name>
    <name type="ORF">SYN_01565</name>
</gene>
<keyword id="KW-0328">Glycosyltransferase</keyword>
<keyword id="KW-0441">Lipid A biosynthesis</keyword>
<keyword id="KW-0444">Lipid biosynthesis</keyword>
<keyword id="KW-0443">Lipid metabolism</keyword>
<keyword id="KW-1185">Reference proteome</keyword>
<keyword id="KW-0808">Transferase</keyword>
<evidence type="ECO:0000255" key="1">
    <source>
        <dbReference type="HAMAP-Rule" id="MF_00392"/>
    </source>
</evidence>
<comment type="function">
    <text evidence="1">Condensation of UDP-2,3-diacylglucosamine and 2,3-diacylglucosamine-1-phosphate to form lipid A disaccharide, a precursor of lipid A, a phosphorylated glycolipid that anchors the lipopolysaccharide to the outer membrane of the cell.</text>
</comment>
<comment type="catalytic activity">
    <reaction evidence="1">
        <text>a lipid X + a UDP-2-N,3-O-bis[(3R)-3-hydroxyacyl]-alpha-D-glucosamine = a lipid A disaccharide + UDP + H(+)</text>
        <dbReference type="Rhea" id="RHEA:67828"/>
        <dbReference type="ChEBI" id="CHEBI:15378"/>
        <dbReference type="ChEBI" id="CHEBI:58223"/>
        <dbReference type="ChEBI" id="CHEBI:137748"/>
        <dbReference type="ChEBI" id="CHEBI:176338"/>
        <dbReference type="ChEBI" id="CHEBI:176343"/>
        <dbReference type="EC" id="2.4.1.182"/>
    </reaction>
</comment>
<comment type="pathway">
    <text evidence="1">Bacterial outer membrane biogenesis; LPS lipid A biosynthesis.</text>
</comment>
<comment type="similarity">
    <text evidence="1">Belongs to the LpxB family.</text>
</comment>
<dbReference type="EC" id="2.4.1.182" evidence="1"/>
<dbReference type="EMBL" id="CP000252">
    <property type="protein sequence ID" value="ABC78124.1"/>
    <property type="molecule type" value="Genomic_DNA"/>
</dbReference>
<dbReference type="RefSeq" id="WP_011418144.1">
    <property type="nucleotide sequence ID" value="NC_007759.1"/>
</dbReference>
<dbReference type="SMR" id="Q2LVL8"/>
<dbReference type="FunCoup" id="Q2LVL8">
    <property type="interactions" value="269"/>
</dbReference>
<dbReference type="STRING" id="56780.SYN_01565"/>
<dbReference type="CAZy" id="GT19">
    <property type="family name" value="Glycosyltransferase Family 19"/>
</dbReference>
<dbReference type="KEGG" id="sat:SYN_01565"/>
<dbReference type="eggNOG" id="COG0763">
    <property type="taxonomic scope" value="Bacteria"/>
</dbReference>
<dbReference type="HOGENOM" id="CLU_036577_3_1_7"/>
<dbReference type="InParanoid" id="Q2LVL8"/>
<dbReference type="OrthoDB" id="9801642at2"/>
<dbReference type="UniPathway" id="UPA00973"/>
<dbReference type="Proteomes" id="UP000001933">
    <property type="component" value="Chromosome"/>
</dbReference>
<dbReference type="GO" id="GO:0016020">
    <property type="term" value="C:membrane"/>
    <property type="evidence" value="ECO:0007669"/>
    <property type="project" value="GOC"/>
</dbReference>
<dbReference type="GO" id="GO:0008915">
    <property type="term" value="F:lipid-A-disaccharide synthase activity"/>
    <property type="evidence" value="ECO:0007669"/>
    <property type="project" value="UniProtKB-UniRule"/>
</dbReference>
<dbReference type="GO" id="GO:0005543">
    <property type="term" value="F:phospholipid binding"/>
    <property type="evidence" value="ECO:0007669"/>
    <property type="project" value="TreeGrafter"/>
</dbReference>
<dbReference type="GO" id="GO:0009245">
    <property type="term" value="P:lipid A biosynthetic process"/>
    <property type="evidence" value="ECO:0007669"/>
    <property type="project" value="UniProtKB-UniRule"/>
</dbReference>
<dbReference type="HAMAP" id="MF_00392">
    <property type="entry name" value="LpxB"/>
    <property type="match status" value="1"/>
</dbReference>
<dbReference type="InterPro" id="IPR003835">
    <property type="entry name" value="Glyco_trans_19"/>
</dbReference>
<dbReference type="NCBIfam" id="TIGR00215">
    <property type="entry name" value="lpxB"/>
    <property type="match status" value="1"/>
</dbReference>
<dbReference type="PANTHER" id="PTHR30372">
    <property type="entry name" value="LIPID-A-DISACCHARIDE SYNTHASE"/>
    <property type="match status" value="1"/>
</dbReference>
<dbReference type="PANTHER" id="PTHR30372:SF4">
    <property type="entry name" value="LIPID-A-DISACCHARIDE SYNTHASE, MITOCHONDRIAL-RELATED"/>
    <property type="match status" value="1"/>
</dbReference>
<dbReference type="Pfam" id="PF02684">
    <property type="entry name" value="LpxB"/>
    <property type="match status" value="1"/>
</dbReference>
<dbReference type="SUPFAM" id="SSF53756">
    <property type="entry name" value="UDP-Glycosyltransferase/glycogen phosphorylase"/>
    <property type="match status" value="1"/>
</dbReference>
<proteinExistence type="inferred from homology"/>
<accession>Q2LVL8</accession>